<accession>P0CI76</accession>
<accession>P14382</accession>
<accession>P68732</accession>
<protein>
    <recommendedName>
        <fullName>Replication termination protein</fullName>
    </recommendedName>
    <alternativeName>
        <fullName>Replication terminator protein</fullName>
    </alternativeName>
</protein>
<organism>
    <name type="scientific">Bacillus subtilis (strain 168)</name>
    <dbReference type="NCBI Taxonomy" id="224308"/>
    <lineage>
        <taxon>Bacteria</taxon>
        <taxon>Bacillati</taxon>
        <taxon>Bacillota</taxon>
        <taxon>Bacilli</taxon>
        <taxon>Bacillales</taxon>
        <taxon>Bacillaceae</taxon>
        <taxon>Bacillus</taxon>
    </lineage>
</organism>
<reference key="1">
    <citation type="journal article" date="1987" name="Nucleic Acids Res.">
        <title>Sequence features of the replication terminus of the Bacillus subtilis chromosome.</title>
        <authorList>
            <person name="Carrigan C.M."/>
            <person name="Haarsma J.A."/>
            <person name="Smith M.T."/>
            <person name="Wake R.G."/>
        </authorList>
    </citation>
    <scope>NUCLEOTIDE SEQUENCE [GENOMIC DNA]</scope>
    <source>
        <strain>168</strain>
    </source>
</reference>
<reference key="2">
    <citation type="journal article" date="1997" name="Nature">
        <title>The complete genome sequence of the Gram-positive bacterium Bacillus subtilis.</title>
        <authorList>
            <person name="Kunst F."/>
            <person name="Ogasawara N."/>
            <person name="Moszer I."/>
            <person name="Albertini A.M."/>
            <person name="Alloni G."/>
            <person name="Azevedo V."/>
            <person name="Bertero M.G."/>
            <person name="Bessieres P."/>
            <person name="Bolotin A."/>
            <person name="Borchert S."/>
            <person name="Borriss R."/>
            <person name="Boursier L."/>
            <person name="Brans A."/>
            <person name="Braun M."/>
            <person name="Brignell S.C."/>
            <person name="Bron S."/>
            <person name="Brouillet S."/>
            <person name="Bruschi C.V."/>
            <person name="Caldwell B."/>
            <person name="Capuano V."/>
            <person name="Carter N.M."/>
            <person name="Choi S.-K."/>
            <person name="Codani J.-J."/>
            <person name="Connerton I.F."/>
            <person name="Cummings N.J."/>
            <person name="Daniel R.A."/>
            <person name="Denizot F."/>
            <person name="Devine K.M."/>
            <person name="Duesterhoeft A."/>
            <person name="Ehrlich S.D."/>
            <person name="Emmerson P.T."/>
            <person name="Entian K.-D."/>
            <person name="Errington J."/>
            <person name="Fabret C."/>
            <person name="Ferrari E."/>
            <person name="Foulger D."/>
            <person name="Fritz C."/>
            <person name="Fujita M."/>
            <person name="Fujita Y."/>
            <person name="Fuma S."/>
            <person name="Galizzi A."/>
            <person name="Galleron N."/>
            <person name="Ghim S.-Y."/>
            <person name="Glaser P."/>
            <person name="Goffeau A."/>
            <person name="Golightly E.J."/>
            <person name="Grandi G."/>
            <person name="Guiseppi G."/>
            <person name="Guy B.J."/>
            <person name="Haga K."/>
            <person name="Haiech J."/>
            <person name="Harwood C.R."/>
            <person name="Henaut A."/>
            <person name="Hilbert H."/>
            <person name="Holsappel S."/>
            <person name="Hosono S."/>
            <person name="Hullo M.-F."/>
            <person name="Itaya M."/>
            <person name="Jones L.-M."/>
            <person name="Joris B."/>
            <person name="Karamata D."/>
            <person name="Kasahara Y."/>
            <person name="Klaerr-Blanchard M."/>
            <person name="Klein C."/>
            <person name="Kobayashi Y."/>
            <person name="Koetter P."/>
            <person name="Koningstein G."/>
            <person name="Krogh S."/>
            <person name="Kumano M."/>
            <person name="Kurita K."/>
            <person name="Lapidus A."/>
            <person name="Lardinois S."/>
            <person name="Lauber J."/>
            <person name="Lazarevic V."/>
            <person name="Lee S.-M."/>
            <person name="Levine A."/>
            <person name="Liu H."/>
            <person name="Masuda S."/>
            <person name="Mauel C."/>
            <person name="Medigue C."/>
            <person name="Medina N."/>
            <person name="Mellado R.P."/>
            <person name="Mizuno M."/>
            <person name="Moestl D."/>
            <person name="Nakai S."/>
            <person name="Noback M."/>
            <person name="Noone D."/>
            <person name="O'Reilly M."/>
            <person name="Ogawa K."/>
            <person name="Ogiwara A."/>
            <person name="Oudega B."/>
            <person name="Park S.-H."/>
            <person name="Parro V."/>
            <person name="Pohl T.M."/>
            <person name="Portetelle D."/>
            <person name="Porwollik S."/>
            <person name="Prescott A.M."/>
            <person name="Presecan E."/>
            <person name="Pujic P."/>
            <person name="Purnelle B."/>
            <person name="Rapoport G."/>
            <person name="Rey M."/>
            <person name="Reynolds S."/>
            <person name="Rieger M."/>
            <person name="Rivolta C."/>
            <person name="Rocha E."/>
            <person name="Roche B."/>
            <person name="Rose M."/>
            <person name="Sadaie Y."/>
            <person name="Sato T."/>
            <person name="Scanlan E."/>
            <person name="Schleich S."/>
            <person name="Schroeter R."/>
            <person name="Scoffone F."/>
            <person name="Sekiguchi J."/>
            <person name="Sekowska A."/>
            <person name="Seror S.J."/>
            <person name="Serror P."/>
            <person name="Shin B.-S."/>
            <person name="Soldo B."/>
            <person name="Sorokin A."/>
            <person name="Tacconi E."/>
            <person name="Takagi T."/>
            <person name="Takahashi H."/>
            <person name="Takemaru K."/>
            <person name="Takeuchi M."/>
            <person name="Tamakoshi A."/>
            <person name="Tanaka T."/>
            <person name="Terpstra P."/>
            <person name="Tognoni A."/>
            <person name="Tosato V."/>
            <person name="Uchiyama S."/>
            <person name="Vandenbol M."/>
            <person name="Vannier F."/>
            <person name="Vassarotti A."/>
            <person name="Viari A."/>
            <person name="Wambutt R."/>
            <person name="Wedler E."/>
            <person name="Wedler H."/>
            <person name="Weitzenegger T."/>
            <person name="Winters P."/>
            <person name="Wipat A."/>
            <person name="Yamamoto H."/>
            <person name="Yamane K."/>
            <person name="Yasumoto K."/>
            <person name="Yata K."/>
            <person name="Yoshida K."/>
            <person name="Yoshikawa H.-F."/>
            <person name="Zumstein E."/>
            <person name="Yoshikawa H."/>
            <person name="Danchin A."/>
        </authorList>
    </citation>
    <scope>NUCLEOTIDE SEQUENCE [LARGE SCALE GENOMIC DNA]</scope>
    <source>
        <strain>168</strain>
    </source>
</reference>
<reference key="3">
    <citation type="journal article" date="1996" name="EMBO J.">
        <title>The structure and function of the replication terminator protein of Bacillus subtilis: identification of the 'winged helix' DNA-binding domain.</title>
        <authorList>
            <person name="Pai K.S."/>
            <person name="Bussiere D.E."/>
            <person name="Wang F."/>
            <person name="Hutchison C.A. III"/>
            <person name="White S.W."/>
            <person name="Bastia D."/>
        </authorList>
    </citation>
    <scope>DOMAINS</scope>
    <scope>MUTAGENESIS</scope>
</reference>
<comment type="function">
    <text>Plays a role in DNA replication and termination (fork arrest mechanism). Two dimers of rtp bind to the two inverted repeat regions (IRI and IRII) present in the termination site. The binding of each dimer is centered on an 8 bp direct repeat.</text>
</comment>
<comment type="subunit">
    <text>Homodimer.</text>
</comment>
<keyword id="KW-0002">3D-structure</keyword>
<keyword id="KW-0238">DNA-binding</keyword>
<keyword id="KW-1185">Reference proteome</keyword>
<evidence type="ECO:0007829" key="1">
    <source>
        <dbReference type="PDB" id="1BM9"/>
    </source>
</evidence>
<evidence type="ECO:0007829" key="2">
    <source>
        <dbReference type="PDB" id="1J0R"/>
    </source>
</evidence>
<gene>
    <name type="primary">rtp</name>
    <name type="ordered locus">BSU18490</name>
</gene>
<proteinExistence type="evidence at protein level"/>
<feature type="chain" id="PRO_0000097523" description="Replication termination protein">
    <location>
        <begin position="1"/>
        <end position="122"/>
    </location>
</feature>
<feature type="strand" evidence="1">
    <location>
        <begin position="10"/>
        <end position="12"/>
    </location>
</feature>
<feature type="helix" evidence="1">
    <location>
        <begin position="15"/>
        <end position="28"/>
    </location>
</feature>
<feature type="turn" evidence="2">
    <location>
        <begin position="34"/>
        <end position="36"/>
    </location>
</feature>
<feature type="helix" evidence="1">
    <location>
        <begin position="37"/>
        <end position="45"/>
    </location>
</feature>
<feature type="turn" evidence="1">
    <location>
        <begin position="46"/>
        <end position="49"/>
    </location>
</feature>
<feature type="helix" evidence="1">
    <location>
        <begin position="54"/>
        <end position="66"/>
    </location>
</feature>
<feature type="strand" evidence="1">
    <location>
        <begin position="69"/>
        <end position="76"/>
    </location>
</feature>
<feature type="strand" evidence="2">
    <location>
        <begin position="80"/>
        <end position="82"/>
    </location>
</feature>
<feature type="strand" evidence="1">
    <location>
        <begin position="84"/>
        <end position="91"/>
    </location>
</feature>
<feature type="helix" evidence="1">
    <location>
        <begin position="93"/>
        <end position="121"/>
    </location>
</feature>
<dbReference type="EMBL" id="X06168">
    <property type="protein sequence ID" value="CAA29534.1"/>
    <property type="molecule type" value="Genomic_DNA"/>
</dbReference>
<dbReference type="EMBL" id="AL009126">
    <property type="protein sequence ID" value="CAB13742.1"/>
    <property type="molecule type" value="Genomic_DNA"/>
</dbReference>
<dbReference type="PIR" id="A32807">
    <property type="entry name" value="A32807"/>
</dbReference>
<dbReference type="RefSeq" id="NP_389731.1">
    <property type="nucleotide sequence ID" value="NC_000964.3"/>
</dbReference>
<dbReference type="RefSeq" id="WP_003220337.1">
    <property type="nucleotide sequence ID" value="NZ_OZ025638.1"/>
</dbReference>
<dbReference type="PDB" id="1BM9">
    <property type="method" value="X-ray"/>
    <property type="resolution" value="2.00 A"/>
    <property type="chains" value="A/B=1-122"/>
</dbReference>
<dbReference type="PDB" id="1F4K">
    <property type="method" value="X-ray"/>
    <property type="resolution" value="2.50 A"/>
    <property type="chains" value="A/B=1-122"/>
</dbReference>
<dbReference type="PDB" id="1J0R">
    <property type="method" value="X-ray"/>
    <property type="resolution" value="2.50 A"/>
    <property type="chains" value="A/B=1-122"/>
</dbReference>
<dbReference type="PDB" id="2DPD">
    <property type="method" value="X-ray"/>
    <property type="resolution" value="3.17 A"/>
    <property type="chains" value="A/B=1-122"/>
</dbReference>
<dbReference type="PDB" id="2DPU">
    <property type="method" value="X-ray"/>
    <property type="resolution" value="3.10 A"/>
    <property type="chains" value="A=1-122"/>
</dbReference>
<dbReference type="PDB" id="2DQR">
    <property type="method" value="X-ray"/>
    <property type="resolution" value="3.01 A"/>
    <property type="chains" value="A/B/C/D=1-122"/>
</dbReference>
<dbReference type="PDB" id="2EFW">
    <property type="method" value="X-ray"/>
    <property type="resolution" value="2.50 A"/>
    <property type="chains" value="A/B/F/G=1-122"/>
</dbReference>
<dbReference type="PDBsum" id="1BM9"/>
<dbReference type="PDBsum" id="1F4K"/>
<dbReference type="PDBsum" id="1J0R"/>
<dbReference type="PDBsum" id="2DPD"/>
<dbReference type="PDBsum" id="2DPU"/>
<dbReference type="PDBsum" id="2DQR"/>
<dbReference type="PDBsum" id="2EFW"/>
<dbReference type="BMRB" id="P0CI76"/>
<dbReference type="SMR" id="P0CI76"/>
<dbReference type="FunCoup" id="P0CI76">
    <property type="interactions" value="239"/>
</dbReference>
<dbReference type="STRING" id="224308.BSU18490"/>
<dbReference type="PaxDb" id="224308-BSU18490"/>
<dbReference type="EnsemblBacteria" id="CAB13742">
    <property type="protein sequence ID" value="CAB13742"/>
    <property type="gene ID" value="BSU_18490"/>
</dbReference>
<dbReference type="GeneID" id="76986963"/>
<dbReference type="GeneID" id="940068"/>
<dbReference type="KEGG" id="bsu:BSU18490"/>
<dbReference type="PATRIC" id="fig|224308.179.peg.2016"/>
<dbReference type="eggNOG" id="COG1695">
    <property type="taxonomic scope" value="Bacteria"/>
</dbReference>
<dbReference type="InParanoid" id="P0CI76"/>
<dbReference type="OrthoDB" id="2438867at2"/>
<dbReference type="EvolutionaryTrace" id="P0CI76"/>
<dbReference type="PRO" id="PR:P0CI76"/>
<dbReference type="Proteomes" id="UP000001570">
    <property type="component" value="Chromosome"/>
</dbReference>
<dbReference type="GO" id="GO:0003677">
    <property type="term" value="F:DNA binding"/>
    <property type="evidence" value="ECO:0007669"/>
    <property type="project" value="UniProtKB-KW"/>
</dbReference>
<dbReference type="GO" id="GO:0006274">
    <property type="term" value="P:DNA replication termination"/>
    <property type="evidence" value="ECO:0007669"/>
    <property type="project" value="InterPro"/>
</dbReference>
<dbReference type="Gene3D" id="1.10.10.10">
    <property type="entry name" value="Winged helix-like DNA-binding domain superfamily/Winged helix DNA-binding domain"/>
    <property type="match status" value="1"/>
</dbReference>
<dbReference type="InterPro" id="IPR003432">
    <property type="entry name" value="RTP"/>
</dbReference>
<dbReference type="InterPro" id="IPR036388">
    <property type="entry name" value="WH-like_DNA-bd_sf"/>
</dbReference>
<dbReference type="InterPro" id="IPR036390">
    <property type="entry name" value="WH_DNA-bd_sf"/>
</dbReference>
<dbReference type="Pfam" id="PF02334">
    <property type="entry name" value="RTP"/>
    <property type="match status" value="1"/>
</dbReference>
<dbReference type="PIRSF" id="PIRSF021424">
    <property type="entry name" value="RTP"/>
    <property type="match status" value="1"/>
</dbReference>
<dbReference type="SUPFAM" id="SSF46785">
    <property type="entry name" value="Winged helix' DNA-binding domain"/>
    <property type="match status" value="1"/>
</dbReference>
<name>RTP_BACSU</name>
<sequence>MKEEKRSSTGFLVKQRAFLKLYMITMTEQERLYGLKLLEVLRSEFKEIGFKPNHTEVYRSLHELLDDGILKQIKVKKEGAKLQEVVLYQFKDYEAAKLYKKQLKVELDRCKKLIEKALSDNF</sequence>